<dbReference type="EMBL" id="AF222894">
    <property type="protein sequence ID" value="AAF30489.1"/>
    <property type="molecule type" value="Genomic_DNA"/>
</dbReference>
<dbReference type="RefSeq" id="WP_006688656.1">
    <property type="nucleotide sequence ID" value="NC_002162.1"/>
</dbReference>
<dbReference type="SMR" id="Q9PR61"/>
<dbReference type="STRING" id="273119.UU084"/>
<dbReference type="EnsemblBacteria" id="AAF30489">
    <property type="protein sequence ID" value="AAF30489"/>
    <property type="gene ID" value="UU084"/>
</dbReference>
<dbReference type="GeneID" id="29672269"/>
<dbReference type="KEGG" id="uur:UU084"/>
<dbReference type="eggNOG" id="COG0468">
    <property type="taxonomic scope" value="Bacteria"/>
</dbReference>
<dbReference type="HOGENOM" id="CLU_040469_1_2_14"/>
<dbReference type="OrthoDB" id="9776733at2"/>
<dbReference type="Proteomes" id="UP000000423">
    <property type="component" value="Chromosome"/>
</dbReference>
<dbReference type="GO" id="GO:0005829">
    <property type="term" value="C:cytosol"/>
    <property type="evidence" value="ECO:0007669"/>
    <property type="project" value="TreeGrafter"/>
</dbReference>
<dbReference type="GO" id="GO:0005524">
    <property type="term" value="F:ATP binding"/>
    <property type="evidence" value="ECO:0007669"/>
    <property type="project" value="UniProtKB-UniRule"/>
</dbReference>
<dbReference type="GO" id="GO:0016887">
    <property type="term" value="F:ATP hydrolysis activity"/>
    <property type="evidence" value="ECO:0007669"/>
    <property type="project" value="InterPro"/>
</dbReference>
<dbReference type="GO" id="GO:0140664">
    <property type="term" value="F:ATP-dependent DNA damage sensor activity"/>
    <property type="evidence" value="ECO:0007669"/>
    <property type="project" value="InterPro"/>
</dbReference>
<dbReference type="GO" id="GO:0003684">
    <property type="term" value="F:damaged DNA binding"/>
    <property type="evidence" value="ECO:0007669"/>
    <property type="project" value="UniProtKB-UniRule"/>
</dbReference>
<dbReference type="GO" id="GO:0003697">
    <property type="term" value="F:single-stranded DNA binding"/>
    <property type="evidence" value="ECO:0007669"/>
    <property type="project" value="UniProtKB-UniRule"/>
</dbReference>
<dbReference type="GO" id="GO:0006310">
    <property type="term" value="P:DNA recombination"/>
    <property type="evidence" value="ECO:0007669"/>
    <property type="project" value="UniProtKB-UniRule"/>
</dbReference>
<dbReference type="GO" id="GO:0006281">
    <property type="term" value="P:DNA repair"/>
    <property type="evidence" value="ECO:0007669"/>
    <property type="project" value="UniProtKB-UniRule"/>
</dbReference>
<dbReference type="GO" id="GO:0009432">
    <property type="term" value="P:SOS response"/>
    <property type="evidence" value="ECO:0007669"/>
    <property type="project" value="UniProtKB-UniRule"/>
</dbReference>
<dbReference type="CDD" id="cd00983">
    <property type="entry name" value="RecA"/>
    <property type="match status" value="1"/>
</dbReference>
<dbReference type="Gene3D" id="3.40.50.300">
    <property type="entry name" value="P-loop containing nucleotide triphosphate hydrolases"/>
    <property type="match status" value="1"/>
</dbReference>
<dbReference type="Gene3D" id="3.30.250.10">
    <property type="entry name" value="RecA protein, C-terminal domain"/>
    <property type="match status" value="1"/>
</dbReference>
<dbReference type="HAMAP" id="MF_00268">
    <property type="entry name" value="RecA"/>
    <property type="match status" value="1"/>
</dbReference>
<dbReference type="InterPro" id="IPR003593">
    <property type="entry name" value="AAA+_ATPase"/>
</dbReference>
<dbReference type="InterPro" id="IPR013765">
    <property type="entry name" value="DNA_recomb/repair_RecA"/>
</dbReference>
<dbReference type="InterPro" id="IPR020584">
    <property type="entry name" value="DNA_recomb/repair_RecA_CS"/>
</dbReference>
<dbReference type="InterPro" id="IPR027417">
    <property type="entry name" value="P-loop_NTPase"/>
</dbReference>
<dbReference type="InterPro" id="IPR049261">
    <property type="entry name" value="RecA-like_C"/>
</dbReference>
<dbReference type="InterPro" id="IPR049428">
    <property type="entry name" value="RecA-like_N"/>
</dbReference>
<dbReference type="InterPro" id="IPR020588">
    <property type="entry name" value="RecA_ATP-bd"/>
</dbReference>
<dbReference type="InterPro" id="IPR023400">
    <property type="entry name" value="RecA_C_sf"/>
</dbReference>
<dbReference type="InterPro" id="IPR020587">
    <property type="entry name" value="RecA_monomer-monomer_interface"/>
</dbReference>
<dbReference type="NCBIfam" id="TIGR02012">
    <property type="entry name" value="tigrfam_recA"/>
    <property type="match status" value="1"/>
</dbReference>
<dbReference type="PANTHER" id="PTHR45900:SF1">
    <property type="entry name" value="MITOCHONDRIAL DNA REPAIR PROTEIN RECA HOMOLOG-RELATED"/>
    <property type="match status" value="1"/>
</dbReference>
<dbReference type="PANTHER" id="PTHR45900">
    <property type="entry name" value="RECA"/>
    <property type="match status" value="1"/>
</dbReference>
<dbReference type="Pfam" id="PF00154">
    <property type="entry name" value="RecA"/>
    <property type="match status" value="1"/>
</dbReference>
<dbReference type="Pfam" id="PF21096">
    <property type="entry name" value="RecA_C"/>
    <property type="match status" value="1"/>
</dbReference>
<dbReference type="PRINTS" id="PR00142">
    <property type="entry name" value="RECA"/>
</dbReference>
<dbReference type="SMART" id="SM00382">
    <property type="entry name" value="AAA"/>
    <property type="match status" value="1"/>
</dbReference>
<dbReference type="SUPFAM" id="SSF52540">
    <property type="entry name" value="P-loop containing nucleoside triphosphate hydrolases"/>
    <property type="match status" value="1"/>
</dbReference>
<dbReference type="SUPFAM" id="SSF54752">
    <property type="entry name" value="RecA protein, C-terminal domain"/>
    <property type="match status" value="1"/>
</dbReference>
<dbReference type="PROSITE" id="PS00321">
    <property type="entry name" value="RECA_1"/>
    <property type="match status" value="1"/>
</dbReference>
<dbReference type="PROSITE" id="PS50162">
    <property type="entry name" value="RECA_2"/>
    <property type="match status" value="1"/>
</dbReference>
<dbReference type="PROSITE" id="PS50163">
    <property type="entry name" value="RECA_3"/>
    <property type="match status" value="1"/>
</dbReference>
<protein>
    <recommendedName>
        <fullName evidence="1">Protein RecA</fullName>
    </recommendedName>
    <alternativeName>
        <fullName evidence="1">Recombinase A</fullName>
    </alternativeName>
</protein>
<keyword id="KW-0067">ATP-binding</keyword>
<keyword id="KW-0963">Cytoplasm</keyword>
<keyword id="KW-0227">DNA damage</keyword>
<keyword id="KW-0233">DNA recombination</keyword>
<keyword id="KW-0234">DNA repair</keyword>
<keyword id="KW-0238">DNA-binding</keyword>
<keyword id="KW-0547">Nucleotide-binding</keyword>
<keyword id="KW-1185">Reference proteome</keyword>
<keyword id="KW-0742">SOS response</keyword>
<reference key="1">
    <citation type="journal article" date="2000" name="Nature">
        <title>The complete sequence of the mucosal pathogen Ureaplasma urealyticum.</title>
        <authorList>
            <person name="Glass J.I."/>
            <person name="Lefkowitz E.J."/>
            <person name="Glass J.S."/>
            <person name="Heiner C.R."/>
            <person name="Chen E.Y."/>
            <person name="Cassell G.H."/>
        </authorList>
    </citation>
    <scope>NUCLEOTIDE SEQUENCE [LARGE SCALE GENOMIC DNA]</scope>
    <source>
        <strain>ATCC 700970</strain>
    </source>
</reference>
<gene>
    <name evidence="1" type="primary">recA</name>
    <name type="ordered locus">UU084</name>
</gene>
<proteinExistence type="inferred from homology"/>
<name>RECA_UREPA</name>
<feature type="chain" id="PRO_0000122889" description="Protein RecA">
    <location>
        <begin position="1"/>
        <end position="334"/>
    </location>
</feature>
<feature type="binding site" evidence="1">
    <location>
        <begin position="65"/>
        <end position="72"/>
    </location>
    <ligand>
        <name>ATP</name>
        <dbReference type="ChEBI" id="CHEBI:30616"/>
    </ligand>
</feature>
<comment type="function">
    <text evidence="1">Can catalyze the hydrolysis of ATP in the presence of single-stranded DNA, the ATP-dependent uptake of single-stranded DNA by duplex DNA, and the ATP-dependent hybridization of homologous single-stranded DNAs. It interacts with LexA causing its activation and leading to its autocatalytic cleavage.</text>
</comment>
<comment type="subcellular location">
    <subcellularLocation>
        <location evidence="1">Cytoplasm</location>
    </subcellularLocation>
</comment>
<comment type="similarity">
    <text evidence="1">Belongs to the RecA family.</text>
</comment>
<evidence type="ECO:0000255" key="1">
    <source>
        <dbReference type="HAMAP-Rule" id="MF_00268"/>
    </source>
</evidence>
<organism>
    <name type="scientific">Ureaplasma parvum serovar 3 (strain ATCC 700970)</name>
    <dbReference type="NCBI Taxonomy" id="273119"/>
    <lineage>
        <taxon>Bacteria</taxon>
        <taxon>Bacillati</taxon>
        <taxon>Mycoplasmatota</taxon>
        <taxon>Mycoplasmoidales</taxon>
        <taxon>Mycoplasmoidaceae</taxon>
        <taxon>Ureaplasma</taxon>
    </lineage>
</organism>
<sequence length="334" mass="37285">MKENNNLEKLDPIATLETKFAKSSYFIADEIKDEKINAISTGSIHIDQITGINGIPVGKITEIYGNESSGKTTIALQTIAECQKTGGTVVLLDLEGSFDINYAKSLKVDLTKLIITQPQTGEQAFDMIETLIKTNSIDLIVIDSVAAMLPESEYQANMNEALMGAHARLMSKGLRKIQPLINKSKTAIIFINQLREKINTFFGNPEMTTGGKALKFYASLRIETKKADLIKEGINKIGIKTKVTTVKNKLAPPLQTCFIDIFFGSGFDYNNEIIDFAIQYGVLKKNGSWFYFNDNKIGQGREQLKNTLSKNNELFIQISEKTLEFVNNEKSNWQ</sequence>
<accession>Q9PR61</accession>